<accession>C5CSM6</accession>
<feature type="chain" id="PRO_1000205776" description="Small ribosomal subunit protein bS16">
    <location>
        <begin position="1"/>
        <end position="87"/>
    </location>
</feature>
<proteinExistence type="inferred from homology"/>
<reference key="1">
    <citation type="journal article" date="2011" name="J. Bacteriol.">
        <title>Complete genome sequence of the metabolically versatile plant growth-promoting endophyte, Variovorax paradoxus S110.</title>
        <authorList>
            <person name="Han J.I."/>
            <person name="Choi H.K."/>
            <person name="Lee S.W."/>
            <person name="Orwin P.M."/>
            <person name="Kim J."/>
            <person name="Laroe S.L."/>
            <person name="Kim T.G."/>
            <person name="O'Neil J."/>
            <person name="Leadbetter J.R."/>
            <person name="Lee S.Y."/>
            <person name="Hur C.G."/>
            <person name="Spain J.C."/>
            <person name="Ovchinnikova G."/>
            <person name="Goodwin L."/>
            <person name="Han C."/>
        </authorList>
    </citation>
    <scope>NUCLEOTIDE SEQUENCE [LARGE SCALE GENOMIC DNA]</scope>
    <source>
        <strain>S110</strain>
    </source>
</reference>
<name>RS16_VARPS</name>
<sequence>MVVIRLSRGGSKGRPFFNIVVSDKRVRRDGRFIERLGFYNPTAKENEESIRIAQDRLAYWKSVGAQASPTVLRLIKQAAAAAPKAAA</sequence>
<gene>
    <name evidence="1" type="primary">rpsP</name>
    <name type="ordered locus">Vapar_1473</name>
</gene>
<protein>
    <recommendedName>
        <fullName evidence="1">Small ribosomal subunit protein bS16</fullName>
    </recommendedName>
    <alternativeName>
        <fullName evidence="2">30S ribosomal protein S16</fullName>
    </alternativeName>
</protein>
<evidence type="ECO:0000255" key="1">
    <source>
        <dbReference type="HAMAP-Rule" id="MF_00385"/>
    </source>
</evidence>
<evidence type="ECO:0000305" key="2"/>
<keyword id="KW-0687">Ribonucleoprotein</keyword>
<keyword id="KW-0689">Ribosomal protein</keyword>
<comment type="similarity">
    <text evidence="1">Belongs to the bacterial ribosomal protein bS16 family.</text>
</comment>
<dbReference type="EMBL" id="CP001635">
    <property type="protein sequence ID" value="ACS18124.1"/>
    <property type="molecule type" value="Genomic_DNA"/>
</dbReference>
<dbReference type="SMR" id="C5CSM6"/>
<dbReference type="STRING" id="543728.Vapar_1473"/>
<dbReference type="KEGG" id="vap:Vapar_1473"/>
<dbReference type="eggNOG" id="COG0228">
    <property type="taxonomic scope" value="Bacteria"/>
</dbReference>
<dbReference type="HOGENOM" id="CLU_100590_5_1_4"/>
<dbReference type="OrthoDB" id="9807878at2"/>
<dbReference type="GO" id="GO:0005737">
    <property type="term" value="C:cytoplasm"/>
    <property type="evidence" value="ECO:0007669"/>
    <property type="project" value="UniProtKB-ARBA"/>
</dbReference>
<dbReference type="GO" id="GO:0015935">
    <property type="term" value="C:small ribosomal subunit"/>
    <property type="evidence" value="ECO:0007669"/>
    <property type="project" value="TreeGrafter"/>
</dbReference>
<dbReference type="GO" id="GO:0003735">
    <property type="term" value="F:structural constituent of ribosome"/>
    <property type="evidence" value="ECO:0007669"/>
    <property type="project" value="InterPro"/>
</dbReference>
<dbReference type="GO" id="GO:0006412">
    <property type="term" value="P:translation"/>
    <property type="evidence" value="ECO:0007669"/>
    <property type="project" value="UniProtKB-UniRule"/>
</dbReference>
<dbReference type="Gene3D" id="3.30.1320.10">
    <property type="match status" value="1"/>
</dbReference>
<dbReference type="HAMAP" id="MF_00385">
    <property type="entry name" value="Ribosomal_bS16"/>
    <property type="match status" value="1"/>
</dbReference>
<dbReference type="InterPro" id="IPR000307">
    <property type="entry name" value="Ribosomal_bS16"/>
</dbReference>
<dbReference type="InterPro" id="IPR023803">
    <property type="entry name" value="Ribosomal_bS16_dom_sf"/>
</dbReference>
<dbReference type="NCBIfam" id="TIGR00002">
    <property type="entry name" value="S16"/>
    <property type="match status" value="1"/>
</dbReference>
<dbReference type="PANTHER" id="PTHR12919">
    <property type="entry name" value="30S RIBOSOMAL PROTEIN S16"/>
    <property type="match status" value="1"/>
</dbReference>
<dbReference type="PANTHER" id="PTHR12919:SF20">
    <property type="entry name" value="SMALL RIBOSOMAL SUBUNIT PROTEIN BS16M"/>
    <property type="match status" value="1"/>
</dbReference>
<dbReference type="Pfam" id="PF00886">
    <property type="entry name" value="Ribosomal_S16"/>
    <property type="match status" value="1"/>
</dbReference>
<dbReference type="SUPFAM" id="SSF54565">
    <property type="entry name" value="Ribosomal protein S16"/>
    <property type="match status" value="1"/>
</dbReference>
<organism>
    <name type="scientific">Variovorax paradoxus (strain S110)</name>
    <dbReference type="NCBI Taxonomy" id="543728"/>
    <lineage>
        <taxon>Bacteria</taxon>
        <taxon>Pseudomonadati</taxon>
        <taxon>Pseudomonadota</taxon>
        <taxon>Betaproteobacteria</taxon>
        <taxon>Burkholderiales</taxon>
        <taxon>Comamonadaceae</taxon>
        <taxon>Variovorax</taxon>
    </lineage>
</organism>